<keyword id="KW-0021">Allosteric enzyme</keyword>
<keyword id="KW-0067">ATP-binding</keyword>
<keyword id="KW-0418">Kinase</keyword>
<keyword id="KW-0547">Nucleotide-binding</keyword>
<keyword id="KW-1185">Reference proteome</keyword>
<keyword id="KW-0808">Transferase</keyword>
<reference key="1">
    <citation type="submission" date="2005-03" db="EMBL/GenBank/DDBJ databases">
        <title>Brevibacillus brevis strain 47, complete genome.</title>
        <authorList>
            <person name="Hosoyama A."/>
            <person name="Yamada R."/>
            <person name="Hongo Y."/>
            <person name="Terui Y."/>
            <person name="Ankai A."/>
            <person name="Masuyama W."/>
            <person name="Sekiguchi M."/>
            <person name="Takeda T."/>
            <person name="Asano K."/>
            <person name="Ohji S."/>
            <person name="Ichikawa N."/>
            <person name="Narita S."/>
            <person name="Aoki N."/>
            <person name="Miura H."/>
            <person name="Matsushita S."/>
            <person name="Sekigawa T."/>
            <person name="Yamagata H."/>
            <person name="Yoshikawa H."/>
            <person name="Udaka S."/>
            <person name="Tanikawa S."/>
            <person name="Fujita N."/>
        </authorList>
    </citation>
    <scope>NUCLEOTIDE SEQUENCE [LARGE SCALE GENOMIC DNA]</scope>
    <source>
        <strain>47 / JCM 6285 / NBRC 100599</strain>
    </source>
</reference>
<feature type="chain" id="PRO_1000147060" description="Protein-arginine kinase">
    <location>
        <begin position="1"/>
        <end position="357"/>
    </location>
</feature>
<feature type="domain" description="Phosphagen kinase C-terminal" evidence="1">
    <location>
        <begin position="24"/>
        <end position="255"/>
    </location>
</feature>
<feature type="short sequence motif" description="RDXXRA motif of the pArg binding pocket involved in allosteric regulation" evidence="1">
    <location>
        <begin position="338"/>
        <end position="343"/>
    </location>
</feature>
<feature type="binding site" evidence="1">
    <location>
        <begin position="27"/>
        <end position="31"/>
    </location>
    <ligand>
        <name>ATP</name>
        <dbReference type="ChEBI" id="CHEBI:30616"/>
    </ligand>
</feature>
<feature type="binding site" evidence="1">
    <location>
        <position position="92"/>
    </location>
    <ligand>
        <name>ATP</name>
        <dbReference type="ChEBI" id="CHEBI:30616"/>
    </ligand>
</feature>
<feature type="binding site" evidence="1">
    <location>
        <position position="126"/>
    </location>
    <ligand>
        <name>ATP</name>
        <dbReference type="ChEBI" id="CHEBI:30616"/>
    </ligand>
</feature>
<feature type="binding site" evidence="1">
    <location>
        <begin position="177"/>
        <end position="181"/>
    </location>
    <ligand>
        <name>ATP</name>
        <dbReference type="ChEBI" id="CHEBI:30616"/>
    </ligand>
</feature>
<feature type="binding site" evidence="1">
    <location>
        <begin position="208"/>
        <end position="213"/>
    </location>
    <ligand>
        <name>ATP</name>
        <dbReference type="ChEBI" id="CHEBI:30616"/>
    </ligand>
</feature>
<sequence length="357" mass="40685">MSQKQFMQNPWSNWMKGEGPDSDIVISTRLRIARNLRQHPFPLLATDSQAEEVVRKVTEVSDSEAMRKRHQLQVIHMDQINPLEKRVLVEKHLISPHLAEESRKGAVLLREDESVSIMVNEEDHIRIQVLLPGFRLNEAWEIGTKIDDIFEKSLNYAFDETRGYLTSCPTNVGTGIRASVMLHLPALVMTQQISRILQAINQVGLVVRGIYGEGSEALGNLFQLSNQVTLGMSESDILSNLYGVARQIIEQERVARTYLLEHTRVSLEDRIFRSYGILMYARTVESKEAAQRLSDVRLGIDLGIIPNVSPLVLNELLVTTQPGFLQHHAGQKLTPDQRDERRARLIRERLRVVESQE</sequence>
<comment type="function">
    <text evidence="1">Catalyzes the specific phosphorylation of arginine residues in proteins.</text>
</comment>
<comment type="catalytic activity">
    <reaction evidence="1">
        <text>L-arginyl-[protein] + ATP = N(omega)-phospho-L-arginyl-[protein] + ADP + H(+)</text>
        <dbReference type="Rhea" id="RHEA:43384"/>
        <dbReference type="Rhea" id="RHEA-COMP:10532"/>
        <dbReference type="Rhea" id="RHEA-COMP:10533"/>
        <dbReference type="ChEBI" id="CHEBI:15378"/>
        <dbReference type="ChEBI" id="CHEBI:29965"/>
        <dbReference type="ChEBI" id="CHEBI:30616"/>
        <dbReference type="ChEBI" id="CHEBI:83226"/>
        <dbReference type="ChEBI" id="CHEBI:456216"/>
        <dbReference type="EC" id="2.7.14.1"/>
    </reaction>
</comment>
<comment type="activity regulation">
    <text evidence="1">Appears to be allosterically activated by the binding of pArg-containing polypeptides to the pArg-binding pocket localized in the C-terminal domain of McsB.</text>
</comment>
<comment type="similarity">
    <text evidence="1">Belongs to the ATP:guanido phosphotransferase family.</text>
</comment>
<evidence type="ECO:0000255" key="1">
    <source>
        <dbReference type="HAMAP-Rule" id="MF_00602"/>
    </source>
</evidence>
<name>MCSB_BREBN</name>
<protein>
    <recommendedName>
        <fullName evidence="1">Protein-arginine kinase</fullName>
        <ecNumber evidence="1">2.7.14.1</ecNumber>
    </recommendedName>
</protein>
<gene>
    <name evidence="1" type="primary">mcsB</name>
    <name type="ordered locus">BBR47_01870</name>
</gene>
<accession>C0ZIE6</accession>
<organism>
    <name type="scientific">Brevibacillus brevis (strain 47 / JCM 6285 / NBRC 100599)</name>
    <dbReference type="NCBI Taxonomy" id="358681"/>
    <lineage>
        <taxon>Bacteria</taxon>
        <taxon>Bacillati</taxon>
        <taxon>Bacillota</taxon>
        <taxon>Bacilli</taxon>
        <taxon>Bacillales</taxon>
        <taxon>Paenibacillaceae</taxon>
        <taxon>Brevibacillus</taxon>
    </lineage>
</organism>
<proteinExistence type="inferred from homology"/>
<dbReference type="EC" id="2.7.14.1" evidence="1"/>
<dbReference type="EMBL" id="AP008955">
    <property type="protein sequence ID" value="BAH41164.1"/>
    <property type="molecule type" value="Genomic_DNA"/>
</dbReference>
<dbReference type="RefSeq" id="WP_012683956.1">
    <property type="nucleotide sequence ID" value="NC_012491.1"/>
</dbReference>
<dbReference type="SMR" id="C0ZIE6"/>
<dbReference type="STRING" id="358681.BBR47_01870"/>
<dbReference type="KEGG" id="bbe:BBR47_01870"/>
<dbReference type="eggNOG" id="COG3869">
    <property type="taxonomic scope" value="Bacteria"/>
</dbReference>
<dbReference type="HOGENOM" id="CLU_066591_1_0_9"/>
<dbReference type="Proteomes" id="UP000001877">
    <property type="component" value="Chromosome"/>
</dbReference>
<dbReference type="GO" id="GO:0005615">
    <property type="term" value="C:extracellular space"/>
    <property type="evidence" value="ECO:0007669"/>
    <property type="project" value="TreeGrafter"/>
</dbReference>
<dbReference type="GO" id="GO:0005524">
    <property type="term" value="F:ATP binding"/>
    <property type="evidence" value="ECO:0007669"/>
    <property type="project" value="UniProtKB-KW"/>
</dbReference>
<dbReference type="GO" id="GO:0004111">
    <property type="term" value="F:creatine kinase activity"/>
    <property type="evidence" value="ECO:0007669"/>
    <property type="project" value="InterPro"/>
</dbReference>
<dbReference type="GO" id="GO:0004672">
    <property type="term" value="F:protein kinase activity"/>
    <property type="evidence" value="ECO:0007669"/>
    <property type="project" value="UniProtKB-UniRule"/>
</dbReference>
<dbReference type="GO" id="GO:0046314">
    <property type="term" value="P:phosphocreatine biosynthetic process"/>
    <property type="evidence" value="ECO:0007669"/>
    <property type="project" value="InterPro"/>
</dbReference>
<dbReference type="CDD" id="cd07930">
    <property type="entry name" value="bacterial_phosphagen_kinase"/>
    <property type="match status" value="1"/>
</dbReference>
<dbReference type="FunFam" id="3.30.590.10:FF:000007">
    <property type="entry name" value="Protein-arginine kinase"/>
    <property type="match status" value="1"/>
</dbReference>
<dbReference type="Gene3D" id="3.30.590.10">
    <property type="entry name" value="Glutamine synthetase/guanido kinase, catalytic domain"/>
    <property type="match status" value="1"/>
</dbReference>
<dbReference type="HAMAP" id="MF_00602">
    <property type="entry name" value="Prot_Arg_kinase"/>
    <property type="match status" value="1"/>
</dbReference>
<dbReference type="InterPro" id="IPR023660">
    <property type="entry name" value="Arg_Kinase"/>
</dbReference>
<dbReference type="InterPro" id="IPR000749">
    <property type="entry name" value="ATP-guanido_PTrfase"/>
</dbReference>
<dbReference type="InterPro" id="IPR022415">
    <property type="entry name" value="ATP-guanido_PTrfase_AS"/>
</dbReference>
<dbReference type="InterPro" id="IPR022414">
    <property type="entry name" value="ATP-guanido_PTrfase_cat"/>
</dbReference>
<dbReference type="InterPro" id="IPR014746">
    <property type="entry name" value="Gln_synth/guanido_kin_cat_dom"/>
</dbReference>
<dbReference type="NCBIfam" id="NF002194">
    <property type="entry name" value="PRK01059.1-4"/>
    <property type="match status" value="1"/>
</dbReference>
<dbReference type="NCBIfam" id="NF002195">
    <property type="entry name" value="PRK01059.1-5"/>
    <property type="match status" value="1"/>
</dbReference>
<dbReference type="PANTHER" id="PTHR11547:SF38">
    <property type="entry name" value="ARGININE KINASE 1-RELATED"/>
    <property type="match status" value="1"/>
</dbReference>
<dbReference type="PANTHER" id="PTHR11547">
    <property type="entry name" value="ARGININE OR CREATINE KINASE"/>
    <property type="match status" value="1"/>
</dbReference>
<dbReference type="Pfam" id="PF00217">
    <property type="entry name" value="ATP-gua_Ptrans"/>
    <property type="match status" value="1"/>
</dbReference>
<dbReference type="SUPFAM" id="SSF55931">
    <property type="entry name" value="Glutamine synthetase/guanido kinase"/>
    <property type="match status" value="1"/>
</dbReference>
<dbReference type="PROSITE" id="PS00112">
    <property type="entry name" value="PHOSPHAGEN_KINASE"/>
    <property type="match status" value="1"/>
</dbReference>
<dbReference type="PROSITE" id="PS51510">
    <property type="entry name" value="PHOSPHAGEN_KINASE_C"/>
    <property type="match status" value="1"/>
</dbReference>